<gene>
    <name type="primary">LAC7</name>
    <name type="ordered locus">Os01g0850700</name>
    <name type="ordered locus">LOC_Os01g63190</name>
    <name type="ORF">OsJ_003987</name>
    <name evidence="4" type="ORF">OsJ_04091</name>
    <name type="ORF">P0414E03.33-1</name>
    <name type="ORF">P0529H11.22-1</name>
</gene>
<accession>Q5N7B4</accession>
<accession>A2ZZL5</accession>
<accession>B7F296</accession>
<sequence>MVIPWCSSMMRLLWFLFALLLARSVADAATANYTFTVESMRVSRLCNSTDIIAVNGLLPGPMIEVNEGDAVAVEVINGSPYNLTIHWHGILQLLTPWADGPSMVTQCPIQPNSSYTYRFNVTGQEGTLWWHAHSSFLRATVYGALIIRPRNGSAYPFPAPDQEVPIVLGEWWSRNVVDIESDAVSSGQLPRESDAFTVNGVTGELYQCANDTFTVDVQPNTTVLLRVINAGLNTHLFFKVAGHAFTVVAVDACYTANYTTDTLVLAPGHTVDALMVTNASAGSYYMAVQAYDSLSPTTMAVTDDTTATAIVHYNTTSTKKNATPVMPTMPQSSDSATANAFYFGLRGPPSPSAPAVPTKVDVNMTIELGLGQLPCDSTQSSCSGKSVAAAMNGVSFRLPSQMSLLEAQFNRTPGVYTADFPDAPQPSGTPMVEGTKVRRLKYNSTVEIVLQNPTAFPSENHPIHLHGFNFFVLAQGLGNFTPGNVSGYNLVDPVSRNTLAVPTGGWAVIRFVANNPGMWFFHCHLDAHVPMGLGMVFAVDNGTTPDSFLPPPPADLPKC</sequence>
<reference key="1">
    <citation type="journal article" date="2002" name="Nature">
        <title>The genome sequence and structure of rice chromosome 1.</title>
        <authorList>
            <person name="Sasaki T."/>
            <person name="Matsumoto T."/>
            <person name="Yamamoto K."/>
            <person name="Sakata K."/>
            <person name="Baba T."/>
            <person name="Katayose Y."/>
            <person name="Wu J."/>
            <person name="Niimura Y."/>
            <person name="Cheng Z."/>
            <person name="Nagamura Y."/>
            <person name="Antonio B.A."/>
            <person name="Kanamori H."/>
            <person name="Hosokawa S."/>
            <person name="Masukawa M."/>
            <person name="Arikawa K."/>
            <person name="Chiden Y."/>
            <person name="Hayashi M."/>
            <person name="Okamoto M."/>
            <person name="Ando T."/>
            <person name="Aoki H."/>
            <person name="Arita K."/>
            <person name="Hamada M."/>
            <person name="Harada C."/>
            <person name="Hijishita S."/>
            <person name="Honda M."/>
            <person name="Ichikawa Y."/>
            <person name="Idonuma A."/>
            <person name="Iijima M."/>
            <person name="Ikeda M."/>
            <person name="Ikeno M."/>
            <person name="Ito S."/>
            <person name="Ito T."/>
            <person name="Ito Y."/>
            <person name="Ito Y."/>
            <person name="Iwabuchi A."/>
            <person name="Kamiya K."/>
            <person name="Karasawa W."/>
            <person name="Katagiri S."/>
            <person name="Kikuta A."/>
            <person name="Kobayashi N."/>
            <person name="Kono I."/>
            <person name="Machita K."/>
            <person name="Maehara T."/>
            <person name="Mizuno H."/>
            <person name="Mizubayashi T."/>
            <person name="Mukai Y."/>
            <person name="Nagasaki H."/>
            <person name="Nakashima M."/>
            <person name="Nakama Y."/>
            <person name="Nakamichi Y."/>
            <person name="Nakamura M."/>
            <person name="Namiki N."/>
            <person name="Negishi M."/>
            <person name="Ohta I."/>
            <person name="Ono N."/>
            <person name="Saji S."/>
            <person name="Sakai K."/>
            <person name="Shibata M."/>
            <person name="Shimokawa T."/>
            <person name="Shomura A."/>
            <person name="Song J."/>
            <person name="Takazaki Y."/>
            <person name="Terasawa K."/>
            <person name="Tsuji K."/>
            <person name="Waki K."/>
            <person name="Yamagata H."/>
            <person name="Yamane H."/>
            <person name="Yoshiki S."/>
            <person name="Yoshihara R."/>
            <person name="Yukawa K."/>
            <person name="Zhong H."/>
            <person name="Iwama H."/>
            <person name="Endo T."/>
            <person name="Ito H."/>
            <person name="Hahn J.H."/>
            <person name="Kim H.-I."/>
            <person name="Eun M.-Y."/>
            <person name="Yano M."/>
            <person name="Jiang J."/>
            <person name="Gojobori T."/>
        </authorList>
    </citation>
    <scope>NUCLEOTIDE SEQUENCE [LARGE SCALE GENOMIC DNA]</scope>
    <source>
        <strain>cv. Nipponbare</strain>
    </source>
</reference>
<reference key="2">
    <citation type="journal article" date="2005" name="Nature">
        <title>The map-based sequence of the rice genome.</title>
        <authorList>
            <consortium name="International rice genome sequencing project (IRGSP)"/>
        </authorList>
    </citation>
    <scope>NUCLEOTIDE SEQUENCE [LARGE SCALE GENOMIC DNA]</scope>
    <source>
        <strain>cv. Nipponbare</strain>
    </source>
</reference>
<reference key="3">
    <citation type="journal article" date="2008" name="Nucleic Acids Res.">
        <title>The rice annotation project database (RAP-DB): 2008 update.</title>
        <authorList>
            <consortium name="The rice annotation project (RAP)"/>
        </authorList>
    </citation>
    <scope>GENOME REANNOTATION</scope>
    <source>
        <strain>cv. Nipponbare</strain>
    </source>
</reference>
<reference key="4">
    <citation type="journal article" date="2013" name="Rice">
        <title>Improvement of the Oryza sativa Nipponbare reference genome using next generation sequence and optical map data.</title>
        <authorList>
            <person name="Kawahara Y."/>
            <person name="de la Bastide M."/>
            <person name="Hamilton J.P."/>
            <person name="Kanamori H."/>
            <person name="McCombie W.R."/>
            <person name="Ouyang S."/>
            <person name="Schwartz D.C."/>
            <person name="Tanaka T."/>
            <person name="Wu J."/>
            <person name="Zhou S."/>
            <person name="Childs K.L."/>
            <person name="Davidson R.M."/>
            <person name="Lin H."/>
            <person name="Quesada-Ocampo L."/>
            <person name="Vaillancourt B."/>
            <person name="Sakai H."/>
            <person name="Lee S.S."/>
            <person name="Kim J."/>
            <person name="Numa H."/>
            <person name="Itoh T."/>
            <person name="Buell C.R."/>
            <person name="Matsumoto T."/>
        </authorList>
    </citation>
    <scope>GENOME REANNOTATION</scope>
    <source>
        <strain>cv. Nipponbare</strain>
    </source>
</reference>
<reference key="5">
    <citation type="journal article" date="2005" name="PLoS Biol.">
        <title>The genomes of Oryza sativa: a history of duplications.</title>
        <authorList>
            <person name="Yu J."/>
            <person name="Wang J."/>
            <person name="Lin W."/>
            <person name="Li S."/>
            <person name="Li H."/>
            <person name="Zhou J."/>
            <person name="Ni P."/>
            <person name="Dong W."/>
            <person name="Hu S."/>
            <person name="Zeng C."/>
            <person name="Zhang J."/>
            <person name="Zhang Y."/>
            <person name="Li R."/>
            <person name="Xu Z."/>
            <person name="Li S."/>
            <person name="Li X."/>
            <person name="Zheng H."/>
            <person name="Cong L."/>
            <person name="Lin L."/>
            <person name="Yin J."/>
            <person name="Geng J."/>
            <person name="Li G."/>
            <person name="Shi J."/>
            <person name="Liu J."/>
            <person name="Lv H."/>
            <person name="Li J."/>
            <person name="Wang J."/>
            <person name="Deng Y."/>
            <person name="Ran L."/>
            <person name="Shi X."/>
            <person name="Wang X."/>
            <person name="Wu Q."/>
            <person name="Li C."/>
            <person name="Ren X."/>
            <person name="Wang J."/>
            <person name="Wang X."/>
            <person name="Li D."/>
            <person name="Liu D."/>
            <person name="Zhang X."/>
            <person name="Ji Z."/>
            <person name="Zhao W."/>
            <person name="Sun Y."/>
            <person name="Zhang Z."/>
            <person name="Bao J."/>
            <person name="Han Y."/>
            <person name="Dong L."/>
            <person name="Ji J."/>
            <person name="Chen P."/>
            <person name="Wu S."/>
            <person name="Liu J."/>
            <person name="Xiao Y."/>
            <person name="Bu D."/>
            <person name="Tan J."/>
            <person name="Yang L."/>
            <person name="Ye C."/>
            <person name="Zhang J."/>
            <person name="Xu J."/>
            <person name="Zhou Y."/>
            <person name="Yu Y."/>
            <person name="Zhang B."/>
            <person name="Zhuang S."/>
            <person name="Wei H."/>
            <person name="Liu B."/>
            <person name="Lei M."/>
            <person name="Yu H."/>
            <person name="Li Y."/>
            <person name="Xu H."/>
            <person name="Wei S."/>
            <person name="He X."/>
            <person name="Fang L."/>
            <person name="Zhang Z."/>
            <person name="Zhang Y."/>
            <person name="Huang X."/>
            <person name="Su Z."/>
            <person name="Tong W."/>
            <person name="Li J."/>
            <person name="Tong Z."/>
            <person name="Li S."/>
            <person name="Ye J."/>
            <person name="Wang L."/>
            <person name="Fang L."/>
            <person name="Lei T."/>
            <person name="Chen C.-S."/>
            <person name="Chen H.-C."/>
            <person name="Xu Z."/>
            <person name="Li H."/>
            <person name="Huang H."/>
            <person name="Zhang F."/>
            <person name="Xu H."/>
            <person name="Li N."/>
            <person name="Zhao C."/>
            <person name="Li S."/>
            <person name="Dong L."/>
            <person name="Huang Y."/>
            <person name="Li L."/>
            <person name="Xi Y."/>
            <person name="Qi Q."/>
            <person name="Li W."/>
            <person name="Zhang B."/>
            <person name="Hu W."/>
            <person name="Zhang Y."/>
            <person name="Tian X."/>
            <person name="Jiao Y."/>
            <person name="Liang X."/>
            <person name="Jin J."/>
            <person name="Gao L."/>
            <person name="Zheng W."/>
            <person name="Hao B."/>
            <person name="Liu S.-M."/>
            <person name="Wang W."/>
            <person name="Yuan L."/>
            <person name="Cao M."/>
            <person name="McDermott J."/>
            <person name="Samudrala R."/>
            <person name="Wang J."/>
            <person name="Wong G.K.-S."/>
            <person name="Yang H."/>
        </authorList>
    </citation>
    <scope>NUCLEOTIDE SEQUENCE [LARGE SCALE GENOMIC DNA]</scope>
    <source>
        <strain>cv. Nipponbare</strain>
    </source>
</reference>
<reference key="6">
    <citation type="journal article" date="2003" name="Science">
        <title>Collection, mapping, and annotation of over 28,000 cDNA clones from japonica rice.</title>
        <authorList>
            <consortium name="The rice full-length cDNA consortium"/>
        </authorList>
    </citation>
    <scope>NUCLEOTIDE SEQUENCE [LARGE SCALE MRNA]</scope>
    <source>
        <strain>cv. Nipponbare</strain>
    </source>
</reference>
<evidence type="ECO:0000250" key="1"/>
<evidence type="ECO:0000255" key="2"/>
<evidence type="ECO:0000305" key="3"/>
<evidence type="ECO:0000312" key="4">
    <source>
        <dbReference type="EMBL" id="EEE55677.1"/>
    </source>
</evidence>
<keyword id="KW-0052">Apoplast</keyword>
<keyword id="KW-0186">Copper</keyword>
<keyword id="KW-0325">Glycoprotein</keyword>
<keyword id="KW-0439">Lignin degradation</keyword>
<keyword id="KW-0479">Metal-binding</keyword>
<keyword id="KW-0560">Oxidoreductase</keyword>
<keyword id="KW-1185">Reference proteome</keyword>
<keyword id="KW-0677">Repeat</keyword>
<keyword id="KW-0964">Secreted</keyword>
<keyword id="KW-0732">Signal</keyword>
<feature type="signal peptide" evidence="2">
    <location>
        <begin position="1"/>
        <end position="28"/>
    </location>
</feature>
<feature type="chain" id="PRO_0000291892" description="Laccase-7">
    <location>
        <begin position="29"/>
        <end position="559"/>
    </location>
</feature>
<feature type="domain" description="Plastocyanin-like 1">
    <location>
        <begin position="36"/>
        <end position="152"/>
    </location>
</feature>
<feature type="domain" description="Plastocyanin-like 2">
    <location>
        <begin position="163"/>
        <end position="316"/>
    </location>
</feature>
<feature type="domain" description="Plastocyanin-like 3">
    <location>
        <begin position="396"/>
        <end position="543"/>
    </location>
</feature>
<feature type="binding site" evidence="1">
    <location>
        <position position="86"/>
    </location>
    <ligand>
        <name>Cu cation</name>
        <dbReference type="ChEBI" id="CHEBI:23378"/>
        <label>1</label>
    </ligand>
</feature>
<feature type="binding site" evidence="1">
    <location>
        <position position="88"/>
    </location>
    <ligand>
        <name>Cu cation</name>
        <dbReference type="ChEBI" id="CHEBI:23378"/>
        <label>2</label>
    </ligand>
</feature>
<feature type="binding site" evidence="1">
    <location>
        <position position="131"/>
    </location>
    <ligand>
        <name>Cu cation</name>
        <dbReference type="ChEBI" id="CHEBI:23378"/>
        <label>2</label>
    </ligand>
</feature>
<feature type="binding site" evidence="1">
    <location>
        <position position="133"/>
    </location>
    <ligand>
        <name>Cu cation</name>
        <dbReference type="ChEBI" id="CHEBI:23378"/>
        <label>3</label>
    </ligand>
</feature>
<feature type="binding site" evidence="1">
    <location>
        <position position="461"/>
    </location>
    <ligand>
        <name>Cu cation</name>
        <dbReference type="ChEBI" id="CHEBI:23378"/>
        <label>4</label>
    </ligand>
</feature>
<feature type="binding site" evidence="1">
    <location>
        <position position="464"/>
    </location>
    <ligand>
        <name>Cu cation</name>
        <dbReference type="ChEBI" id="CHEBI:23378"/>
        <label>1</label>
    </ligand>
</feature>
<feature type="binding site" evidence="1">
    <location>
        <position position="466"/>
    </location>
    <ligand>
        <name>Cu cation</name>
        <dbReference type="ChEBI" id="CHEBI:23378"/>
        <label>3</label>
    </ligand>
</feature>
<feature type="binding site" evidence="1">
    <location>
        <position position="522"/>
    </location>
    <ligand>
        <name>Cu cation</name>
        <dbReference type="ChEBI" id="CHEBI:23378"/>
        <label>3</label>
    </ligand>
</feature>
<feature type="binding site" evidence="1">
    <location>
        <position position="523"/>
    </location>
    <ligand>
        <name>Cu cation</name>
        <dbReference type="ChEBI" id="CHEBI:23378"/>
        <label>4</label>
    </ligand>
</feature>
<feature type="binding site" evidence="1">
    <location>
        <position position="524"/>
    </location>
    <ligand>
        <name>Cu cation</name>
        <dbReference type="ChEBI" id="CHEBI:23378"/>
        <label>2</label>
    </ligand>
</feature>
<feature type="binding site" evidence="1">
    <location>
        <position position="528"/>
    </location>
    <ligand>
        <name>Cu cation</name>
        <dbReference type="ChEBI" id="CHEBI:23378"/>
        <label>4</label>
    </ligand>
</feature>
<feature type="glycosylation site" description="N-linked (GlcNAc...) asparagine" evidence="2">
    <location>
        <position position="32"/>
    </location>
</feature>
<feature type="glycosylation site" description="N-linked (GlcNAc...) asparagine" evidence="2">
    <location>
        <position position="47"/>
    </location>
</feature>
<feature type="glycosylation site" description="N-linked (GlcNAc...) asparagine" evidence="2">
    <location>
        <position position="82"/>
    </location>
</feature>
<feature type="glycosylation site" description="N-linked (GlcNAc...) asparagine" evidence="2">
    <location>
        <position position="112"/>
    </location>
</feature>
<feature type="glycosylation site" description="N-linked (GlcNAc...) asparagine" evidence="2">
    <location>
        <position position="120"/>
    </location>
</feature>
<feature type="glycosylation site" description="N-linked (GlcNAc...) asparagine" evidence="2">
    <location>
        <position position="151"/>
    </location>
</feature>
<feature type="glycosylation site" description="N-linked (GlcNAc...) asparagine" evidence="2">
    <location>
        <position position="210"/>
    </location>
</feature>
<feature type="glycosylation site" description="N-linked (GlcNAc...) asparagine" evidence="2">
    <location>
        <position position="220"/>
    </location>
</feature>
<feature type="glycosylation site" description="N-linked (GlcNAc...) asparagine" evidence="2">
    <location>
        <position position="257"/>
    </location>
</feature>
<feature type="glycosylation site" description="N-linked (GlcNAc...) asparagine" evidence="2">
    <location>
        <position position="278"/>
    </location>
</feature>
<feature type="glycosylation site" description="N-linked (GlcNAc...) asparagine" evidence="2">
    <location>
        <position position="314"/>
    </location>
</feature>
<feature type="glycosylation site" description="N-linked (GlcNAc...) asparagine" evidence="2">
    <location>
        <position position="363"/>
    </location>
</feature>
<feature type="glycosylation site" description="N-linked (GlcNAc...) asparagine" evidence="2">
    <location>
        <position position="443"/>
    </location>
</feature>
<feature type="glycosylation site" description="N-linked (GlcNAc...) asparagine" evidence="2">
    <location>
        <position position="484"/>
    </location>
</feature>
<feature type="glycosylation site" description="N-linked (GlcNAc...) asparagine" evidence="2">
    <location>
        <position position="541"/>
    </location>
</feature>
<dbReference type="EC" id="1.10.3.2"/>
<dbReference type="EMBL" id="AP003242">
    <property type="protein sequence ID" value="BAD81779.1"/>
    <property type="molecule type" value="Genomic_DNA"/>
</dbReference>
<dbReference type="EMBL" id="AP004072">
    <property type="protein sequence ID" value="BAD82647.1"/>
    <property type="molecule type" value="Genomic_DNA"/>
</dbReference>
<dbReference type="EMBL" id="AP008207">
    <property type="protein sequence ID" value="BAF06729.1"/>
    <property type="molecule type" value="Genomic_DNA"/>
</dbReference>
<dbReference type="EMBL" id="AP014957">
    <property type="protein sequence ID" value="BAS75243.1"/>
    <property type="molecule type" value="Genomic_DNA"/>
</dbReference>
<dbReference type="EMBL" id="CM000138">
    <property type="protein sequence ID" value="EEE55677.1"/>
    <property type="molecule type" value="Genomic_DNA"/>
</dbReference>
<dbReference type="EMBL" id="AK109431">
    <property type="protein sequence ID" value="BAG98743.1"/>
    <property type="molecule type" value="mRNA"/>
</dbReference>
<dbReference type="RefSeq" id="XP_015621472.1">
    <property type="nucleotide sequence ID" value="XM_015765986.1"/>
</dbReference>
<dbReference type="SMR" id="Q5N7B4"/>
<dbReference type="STRING" id="39947.Q5N7B4"/>
<dbReference type="GlyCosmos" id="Q5N7B4">
    <property type="glycosylation" value="15 sites, No reported glycans"/>
</dbReference>
<dbReference type="PaxDb" id="39947-Q5N7B4"/>
<dbReference type="EnsemblPlants" id="Os01t0850700-02">
    <property type="protein sequence ID" value="Os01t0850700-02"/>
    <property type="gene ID" value="Os01g0850700"/>
</dbReference>
<dbReference type="Gramene" id="Os01t0850700-02">
    <property type="protein sequence ID" value="Os01t0850700-02"/>
    <property type="gene ID" value="Os01g0850700"/>
</dbReference>
<dbReference type="KEGG" id="dosa:Os01g0850700"/>
<dbReference type="eggNOG" id="KOG1263">
    <property type="taxonomic scope" value="Eukaryota"/>
</dbReference>
<dbReference type="HOGENOM" id="CLU_006504_6_3_1"/>
<dbReference type="InParanoid" id="Q5N7B4"/>
<dbReference type="OMA" id="WYHSHQV"/>
<dbReference type="OrthoDB" id="2121828at2759"/>
<dbReference type="Proteomes" id="UP000000763">
    <property type="component" value="Chromosome 1"/>
</dbReference>
<dbReference type="Proteomes" id="UP000007752">
    <property type="component" value="Chromosome 1"/>
</dbReference>
<dbReference type="Proteomes" id="UP000059680">
    <property type="component" value="Chromosome 1"/>
</dbReference>
<dbReference type="ExpressionAtlas" id="Q5N7B4">
    <property type="expression patterns" value="baseline and differential"/>
</dbReference>
<dbReference type="GO" id="GO:0048046">
    <property type="term" value="C:apoplast"/>
    <property type="evidence" value="ECO:0007669"/>
    <property type="project" value="UniProtKB-SubCell"/>
</dbReference>
<dbReference type="GO" id="GO:0005507">
    <property type="term" value="F:copper ion binding"/>
    <property type="evidence" value="ECO:0007669"/>
    <property type="project" value="InterPro"/>
</dbReference>
<dbReference type="GO" id="GO:0052716">
    <property type="term" value="F:hydroquinone:oxygen oxidoreductase activity"/>
    <property type="evidence" value="ECO:0007669"/>
    <property type="project" value="UniProtKB-EC"/>
</dbReference>
<dbReference type="GO" id="GO:0016491">
    <property type="term" value="F:oxidoreductase activity"/>
    <property type="evidence" value="ECO:0000318"/>
    <property type="project" value="GO_Central"/>
</dbReference>
<dbReference type="GO" id="GO:0046274">
    <property type="term" value="P:lignin catabolic process"/>
    <property type="evidence" value="ECO:0007669"/>
    <property type="project" value="UniProtKB-KW"/>
</dbReference>
<dbReference type="CDD" id="cd13849">
    <property type="entry name" value="CuRO_1_LCC_plant"/>
    <property type="match status" value="1"/>
</dbReference>
<dbReference type="CDD" id="cd13875">
    <property type="entry name" value="CuRO_2_LCC_plant"/>
    <property type="match status" value="1"/>
</dbReference>
<dbReference type="Gene3D" id="2.60.40.420">
    <property type="entry name" value="Cupredoxins - blue copper proteins"/>
    <property type="match status" value="3"/>
</dbReference>
<dbReference type="InterPro" id="IPR011707">
    <property type="entry name" value="Cu-oxidase-like_N"/>
</dbReference>
<dbReference type="InterPro" id="IPR001117">
    <property type="entry name" value="Cu-oxidase_2nd"/>
</dbReference>
<dbReference type="InterPro" id="IPR011706">
    <property type="entry name" value="Cu-oxidase_C"/>
</dbReference>
<dbReference type="InterPro" id="IPR045087">
    <property type="entry name" value="Cu-oxidase_fam"/>
</dbReference>
<dbReference type="InterPro" id="IPR033138">
    <property type="entry name" value="Cu_oxidase_CS"/>
</dbReference>
<dbReference type="InterPro" id="IPR002355">
    <property type="entry name" value="Cu_oxidase_Cu_BS"/>
</dbReference>
<dbReference type="InterPro" id="IPR008972">
    <property type="entry name" value="Cupredoxin"/>
</dbReference>
<dbReference type="InterPro" id="IPR034288">
    <property type="entry name" value="CuRO_1_LCC"/>
</dbReference>
<dbReference type="InterPro" id="IPR034285">
    <property type="entry name" value="CuRO_2_LCC"/>
</dbReference>
<dbReference type="InterPro" id="IPR017761">
    <property type="entry name" value="Laccase"/>
</dbReference>
<dbReference type="NCBIfam" id="TIGR03389">
    <property type="entry name" value="laccase"/>
    <property type="match status" value="1"/>
</dbReference>
<dbReference type="PANTHER" id="PTHR11709:SF109">
    <property type="entry name" value="LACCASE-7"/>
    <property type="match status" value="1"/>
</dbReference>
<dbReference type="PANTHER" id="PTHR11709">
    <property type="entry name" value="MULTI-COPPER OXIDASE"/>
    <property type="match status" value="1"/>
</dbReference>
<dbReference type="Pfam" id="PF00394">
    <property type="entry name" value="Cu-oxidase"/>
    <property type="match status" value="1"/>
</dbReference>
<dbReference type="Pfam" id="PF07731">
    <property type="entry name" value="Cu-oxidase_2"/>
    <property type="match status" value="1"/>
</dbReference>
<dbReference type="Pfam" id="PF07732">
    <property type="entry name" value="Cu-oxidase_3"/>
    <property type="match status" value="1"/>
</dbReference>
<dbReference type="SUPFAM" id="SSF49503">
    <property type="entry name" value="Cupredoxins"/>
    <property type="match status" value="3"/>
</dbReference>
<dbReference type="PROSITE" id="PS00079">
    <property type="entry name" value="MULTICOPPER_OXIDASE1"/>
    <property type="match status" value="1"/>
</dbReference>
<dbReference type="PROSITE" id="PS00080">
    <property type="entry name" value="MULTICOPPER_OXIDASE2"/>
    <property type="match status" value="1"/>
</dbReference>
<protein>
    <recommendedName>
        <fullName>Laccase-7</fullName>
        <ecNumber>1.10.3.2</ecNumber>
    </recommendedName>
    <alternativeName>
        <fullName>Benzenediol:oxygen oxidoreductase 7</fullName>
    </alternativeName>
    <alternativeName>
        <fullName>Diphenol oxidase 7</fullName>
    </alternativeName>
    <alternativeName>
        <fullName>Urishiol oxidase 7</fullName>
    </alternativeName>
</protein>
<name>LAC7_ORYSJ</name>
<proteinExistence type="evidence at transcript level"/>
<comment type="function">
    <text evidence="1">Lignin degradation and detoxification of lignin-derived products.</text>
</comment>
<comment type="catalytic activity">
    <reaction>
        <text>4 hydroquinone + O2 = 4 benzosemiquinone + 2 H2O</text>
        <dbReference type="Rhea" id="RHEA:11276"/>
        <dbReference type="ChEBI" id="CHEBI:15377"/>
        <dbReference type="ChEBI" id="CHEBI:15379"/>
        <dbReference type="ChEBI" id="CHEBI:17594"/>
        <dbReference type="ChEBI" id="CHEBI:17977"/>
        <dbReference type="EC" id="1.10.3.2"/>
    </reaction>
</comment>
<comment type="cofactor">
    <cofactor evidence="1">
        <name>Cu cation</name>
        <dbReference type="ChEBI" id="CHEBI:23378"/>
    </cofactor>
    <text evidence="1">Binds 4 Cu cations per monomer.</text>
</comment>
<comment type="subcellular location">
    <subcellularLocation>
        <location evidence="3">Secreted</location>
        <location evidence="3">Extracellular space</location>
        <location evidence="3">Apoplast</location>
    </subcellularLocation>
</comment>
<comment type="similarity">
    <text evidence="3">Belongs to the multicopper oxidase family.</text>
</comment>
<organism>
    <name type="scientific">Oryza sativa subsp. japonica</name>
    <name type="common">Rice</name>
    <dbReference type="NCBI Taxonomy" id="39947"/>
    <lineage>
        <taxon>Eukaryota</taxon>
        <taxon>Viridiplantae</taxon>
        <taxon>Streptophyta</taxon>
        <taxon>Embryophyta</taxon>
        <taxon>Tracheophyta</taxon>
        <taxon>Spermatophyta</taxon>
        <taxon>Magnoliopsida</taxon>
        <taxon>Liliopsida</taxon>
        <taxon>Poales</taxon>
        <taxon>Poaceae</taxon>
        <taxon>BOP clade</taxon>
        <taxon>Oryzoideae</taxon>
        <taxon>Oryzeae</taxon>
        <taxon>Oryzinae</taxon>
        <taxon>Oryza</taxon>
        <taxon>Oryza sativa</taxon>
    </lineage>
</organism>